<accession>O42182</accession>
<accession>O42183</accession>
<feature type="signal peptide" evidence="2">
    <location>
        <begin position="1"/>
        <end position="17"/>
    </location>
</feature>
<feature type="chain" id="PRO_0000007566" description="Fibulin-1">
    <location>
        <begin position="18"/>
        <end position="681"/>
    </location>
</feature>
<feature type="domain" description="Anaphylatoxin-like 1" evidence="3">
    <location>
        <begin position="29"/>
        <end position="63"/>
    </location>
</feature>
<feature type="domain" description="Anaphylatoxin-like 2" evidence="3">
    <location>
        <begin position="68"/>
        <end position="107"/>
    </location>
</feature>
<feature type="domain" description="Anaphylatoxin-like 3" evidence="3">
    <location>
        <begin position="108"/>
        <end position="139"/>
    </location>
</feature>
<feature type="domain" description="EGF-like 1" evidence="4">
    <location>
        <begin position="158"/>
        <end position="192"/>
    </location>
</feature>
<feature type="domain" description="EGF-like 2; calcium-binding" evidence="4">
    <location>
        <begin position="193"/>
        <end position="238"/>
    </location>
</feature>
<feature type="domain" description="EGF-like 3; calcium-binding" evidence="4">
    <location>
        <begin position="239"/>
        <end position="284"/>
    </location>
</feature>
<feature type="domain" description="EGF-like 4; calcium-binding" evidence="4">
    <location>
        <begin position="285"/>
        <end position="331"/>
    </location>
</feature>
<feature type="domain" description="EGF-like 5; calcium-binding" evidence="4">
    <location>
        <begin position="332"/>
        <end position="373"/>
    </location>
</feature>
<feature type="domain" description="EGF-like 6; calcium-binding" evidence="4">
    <location>
        <begin position="374"/>
        <end position="415"/>
    </location>
</feature>
<feature type="domain" description="EGF-like 7; calcium-binding" evidence="4">
    <location>
        <begin position="416"/>
        <end position="455"/>
    </location>
</feature>
<feature type="domain" description="EGF-like 8; calcium-binding" evidence="4">
    <location>
        <begin position="456"/>
        <end position="499"/>
    </location>
</feature>
<feature type="domain" description="EGF-like 9; calcium-binding" evidence="4">
    <location>
        <begin position="500"/>
        <end position="554"/>
    </location>
</feature>
<feature type="glycosylation site" description="N-linked (GlcNAc...) asparagine" evidence="2">
    <location>
        <position position="173"/>
    </location>
</feature>
<feature type="disulfide bond" evidence="1">
    <location>
        <begin position="29"/>
        <end position="55"/>
    </location>
</feature>
<feature type="disulfide bond" evidence="1">
    <location>
        <begin position="30"/>
        <end position="62"/>
    </location>
</feature>
<feature type="disulfide bond" evidence="1">
    <location>
        <begin position="43"/>
        <end position="63"/>
    </location>
</feature>
<feature type="disulfide bond" evidence="1">
    <location>
        <begin position="72"/>
        <end position="103"/>
    </location>
</feature>
<feature type="disulfide bond" evidence="1">
    <location>
        <begin position="85"/>
        <end position="104"/>
    </location>
</feature>
<feature type="disulfide bond" evidence="1">
    <location>
        <begin position="106"/>
        <end position="125"/>
    </location>
</feature>
<feature type="disulfide bond" evidence="1">
    <location>
        <begin position="107"/>
        <end position="138"/>
    </location>
</feature>
<feature type="disulfide bond" evidence="1">
    <location>
        <begin position="114"/>
        <end position="139"/>
    </location>
</feature>
<feature type="disulfide bond" evidence="1">
    <location>
        <begin position="162"/>
        <end position="171"/>
    </location>
</feature>
<feature type="disulfide bond" evidence="1">
    <location>
        <begin position="167"/>
        <end position="176"/>
    </location>
</feature>
<feature type="disulfide bond" evidence="1">
    <location>
        <begin position="178"/>
        <end position="191"/>
    </location>
</feature>
<feature type="disulfide bond" evidence="1">
    <location>
        <begin position="197"/>
        <end position="210"/>
    </location>
</feature>
<feature type="disulfide bond" evidence="1">
    <location>
        <begin position="204"/>
        <end position="219"/>
    </location>
</feature>
<feature type="disulfide bond" evidence="1">
    <location>
        <begin position="225"/>
        <end position="237"/>
    </location>
</feature>
<feature type="disulfide bond" evidence="1">
    <location>
        <begin position="243"/>
        <end position="256"/>
    </location>
</feature>
<feature type="disulfide bond" evidence="1">
    <location>
        <begin position="250"/>
        <end position="265"/>
    </location>
</feature>
<feature type="disulfide bond" evidence="1">
    <location>
        <begin position="271"/>
        <end position="283"/>
    </location>
</feature>
<feature type="disulfide bond" evidence="1">
    <location>
        <begin position="289"/>
        <end position="301"/>
    </location>
</feature>
<feature type="disulfide bond" evidence="1">
    <location>
        <begin position="317"/>
        <end position="330"/>
    </location>
</feature>
<feature type="disulfide bond" evidence="1">
    <location>
        <begin position="336"/>
        <end position="348"/>
    </location>
</feature>
<feature type="disulfide bond" evidence="1">
    <location>
        <begin position="343"/>
        <end position="357"/>
    </location>
</feature>
<feature type="disulfide bond" evidence="1">
    <location>
        <begin position="359"/>
        <end position="372"/>
    </location>
</feature>
<feature type="disulfide bond" evidence="1">
    <location>
        <begin position="378"/>
        <end position="390"/>
    </location>
</feature>
<feature type="disulfide bond" evidence="1">
    <location>
        <begin position="386"/>
        <end position="399"/>
    </location>
</feature>
<feature type="disulfide bond" evidence="1">
    <location>
        <begin position="401"/>
        <end position="414"/>
    </location>
</feature>
<feature type="disulfide bond" evidence="1">
    <location>
        <begin position="420"/>
        <end position="429"/>
    </location>
</feature>
<feature type="disulfide bond" evidence="1">
    <location>
        <begin position="440"/>
        <end position="454"/>
    </location>
</feature>
<feature type="disulfide bond" evidence="1">
    <location>
        <begin position="460"/>
        <end position="473"/>
    </location>
</feature>
<feature type="disulfide bond" evidence="1">
    <location>
        <begin position="469"/>
        <end position="482"/>
    </location>
</feature>
<feature type="disulfide bond" evidence="1">
    <location>
        <begin position="484"/>
        <end position="498"/>
    </location>
</feature>
<feature type="disulfide bond" evidence="1">
    <location>
        <begin position="504"/>
        <end position="517"/>
    </location>
</feature>
<feature type="disulfide bond" evidence="1">
    <location>
        <begin position="511"/>
        <end position="526"/>
    </location>
</feature>
<feature type="disulfide bond" evidence="1">
    <location>
        <begin position="531"/>
        <end position="553"/>
    </location>
</feature>
<feature type="splice variant" id="VSP_007379" description="In isoform C." evidence="5">
    <original>RPRVDRADIIRCVKSCQHNDISCVLNPILSHSHTAISLPTFREFNKPEEIVFLRSPTPTHLPHMDSPEIVYDILEGNIQNSFDIIKRLDHGMIVGVVKQVRPLVGPVRTVLKLAMNYVTNGVVSHRNIINVRIYVSEFWF</original>
    <variation>RCERLSCNESNECMAFTRRITYYQLTFPAKIPVPTDLFRMGPSNTALGDDIEVAIVDGNRDGFFAAKRLDHGGVLVLQKPIAWPQDFQIALEMKLKRFGHLSIYLFKIRPVRHARRHQQRY</variation>
    <location>
        <begin position="542"/>
        <end position="681"/>
    </location>
</feature>
<dbReference type="EMBL" id="AF013751">
    <property type="protein sequence ID" value="AAB80944.1"/>
    <property type="molecule type" value="mRNA"/>
</dbReference>
<dbReference type="EMBL" id="AF013752">
    <property type="protein sequence ID" value="AAB80945.1"/>
    <property type="molecule type" value="mRNA"/>
</dbReference>
<dbReference type="FunCoup" id="O42182">
    <property type="interactions" value="1527"/>
</dbReference>
<dbReference type="STRING" id="7955.ENSDARP00000136402"/>
<dbReference type="GlyCosmos" id="O42182">
    <property type="glycosylation" value="1 site, No reported glycans"/>
</dbReference>
<dbReference type="PaxDb" id="7955-ENSDARP00000108375"/>
<dbReference type="AGR" id="ZFIN:ZDB-GENE-990415-73"/>
<dbReference type="ZFIN" id="ZDB-GENE-990415-73">
    <property type="gene designation" value="fbln1"/>
</dbReference>
<dbReference type="eggNOG" id="KOG1217">
    <property type="taxonomic scope" value="Eukaryota"/>
</dbReference>
<dbReference type="InParanoid" id="O42182"/>
<dbReference type="PhylomeDB" id="O42182"/>
<dbReference type="PRO" id="PR:O42182"/>
<dbReference type="Proteomes" id="UP000000437">
    <property type="component" value="Unplaced"/>
</dbReference>
<dbReference type="GO" id="GO:0005576">
    <property type="term" value="C:extracellular region"/>
    <property type="evidence" value="ECO:0007669"/>
    <property type="project" value="UniProtKB-KW"/>
</dbReference>
<dbReference type="GO" id="GO:0005509">
    <property type="term" value="F:calcium ion binding"/>
    <property type="evidence" value="ECO:0007669"/>
    <property type="project" value="InterPro"/>
</dbReference>
<dbReference type="GO" id="GO:0016504">
    <property type="term" value="F:peptidase activator activity"/>
    <property type="evidence" value="ECO:0007669"/>
    <property type="project" value="InterPro"/>
</dbReference>
<dbReference type="GO" id="GO:0035122">
    <property type="term" value="P:embryonic medial fin morphogenesis"/>
    <property type="evidence" value="ECO:0000316"/>
    <property type="project" value="ZFIN"/>
</dbReference>
<dbReference type="GO" id="GO:0030198">
    <property type="term" value="P:extracellular matrix organization"/>
    <property type="evidence" value="ECO:0000316"/>
    <property type="project" value="ZFIN"/>
</dbReference>
<dbReference type="GO" id="GO:0090497">
    <property type="term" value="P:mesenchymal cell migration"/>
    <property type="evidence" value="ECO:0000316"/>
    <property type="project" value="ZFIN"/>
</dbReference>
<dbReference type="GO" id="GO:0043589">
    <property type="term" value="P:skin morphogenesis"/>
    <property type="evidence" value="ECO:0000316"/>
    <property type="project" value="ZFIN"/>
</dbReference>
<dbReference type="CDD" id="cd00017">
    <property type="entry name" value="ANATO"/>
    <property type="match status" value="1"/>
</dbReference>
<dbReference type="CDD" id="cd00054">
    <property type="entry name" value="EGF_CA"/>
    <property type="match status" value="3"/>
</dbReference>
<dbReference type="FunFam" id="2.10.25.10:FF:001228">
    <property type="entry name" value="Fibulin 1"/>
    <property type="match status" value="1"/>
</dbReference>
<dbReference type="FunFam" id="2.10.25.10:FF:000341">
    <property type="entry name" value="Fibulin 2"/>
    <property type="match status" value="1"/>
</dbReference>
<dbReference type="FunFam" id="2.10.25.10:FF:000078">
    <property type="entry name" value="Fibulin-1"/>
    <property type="match status" value="1"/>
</dbReference>
<dbReference type="FunFam" id="2.10.25.10:FF:000104">
    <property type="entry name" value="Fibulin-1"/>
    <property type="match status" value="1"/>
</dbReference>
<dbReference type="FunFam" id="2.10.25.10:FF:000108">
    <property type="entry name" value="Fibulin-1"/>
    <property type="match status" value="1"/>
</dbReference>
<dbReference type="FunFam" id="2.10.25.10:FF:000139">
    <property type="entry name" value="Fibulin-1"/>
    <property type="match status" value="1"/>
</dbReference>
<dbReference type="FunFam" id="2.10.25.10:FF:000150">
    <property type="entry name" value="Fibulin-1"/>
    <property type="match status" value="1"/>
</dbReference>
<dbReference type="Gene3D" id="2.10.25.10">
    <property type="entry name" value="Laminin"/>
    <property type="match status" value="9"/>
</dbReference>
<dbReference type="InterPro" id="IPR000020">
    <property type="entry name" value="Anaphylatoxin/fibulin"/>
</dbReference>
<dbReference type="InterPro" id="IPR026823">
    <property type="entry name" value="cEGF"/>
</dbReference>
<dbReference type="InterPro" id="IPR001881">
    <property type="entry name" value="EGF-like_Ca-bd_dom"/>
</dbReference>
<dbReference type="InterPro" id="IPR000742">
    <property type="entry name" value="EGF-like_dom"/>
</dbReference>
<dbReference type="InterPro" id="IPR000152">
    <property type="entry name" value="EGF-type_Asp/Asn_hydroxyl_site"/>
</dbReference>
<dbReference type="InterPro" id="IPR018097">
    <property type="entry name" value="EGF_Ca-bd_CS"/>
</dbReference>
<dbReference type="InterPro" id="IPR017048">
    <property type="entry name" value="Fibulin-1"/>
</dbReference>
<dbReference type="InterPro" id="IPR055088">
    <property type="entry name" value="Fibulin_C"/>
</dbReference>
<dbReference type="InterPro" id="IPR009030">
    <property type="entry name" value="Growth_fac_rcpt_cys_sf"/>
</dbReference>
<dbReference type="InterPro" id="IPR049883">
    <property type="entry name" value="NOTCH1_EGF-like"/>
</dbReference>
<dbReference type="PANTHER" id="PTHR24039:SF53">
    <property type="entry name" value="EGF-LIKE DOMAIN-CONTAINING PROTEIN"/>
    <property type="match status" value="1"/>
</dbReference>
<dbReference type="PANTHER" id="PTHR24039">
    <property type="entry name" value="FIBRILLIN-RELATED"/>
    <property type="match status" value="1"/>
</dbReference>
<dbReference type="Pfam" id="PF01821">
    <property type="entry name" value="ANATO"/>
    <property type="match status" value="1"/>
</dbReference>
<dbReference type="Pfam" id="PF12662">
    <property type="entry name" value="cEGF"/>
    <property type="match status" value="2"/>
</dbReference>
<dbReference type="Pfam" id="PF07645">
    <property type="entry name" value="EGF_CA"/>
    <property type="match status" value="4"/>
</dbReference>
<dbReference type="Pfam" id="PF22914">
    <property type="entry name" value="Fibulin_C"/>
    <property type="match status" value="1"/>
</dbReference>
<dbReference type="PIRSF" id="PIRSF036313">
    <property type="entry name" value="Fibulin-1"/>
    <property type="match status" value="1"/>
</dbReference>
<dbReference type="SMART" id="SM00104">
    <property type="entry name" value="ANATO"/>
    <property type="match status" value="2"/>
</dbReference>
<dbReference type="SMART" id="SM00181">
    <property type="entry name" value="EGF"/>
    <property type="match status" value="8"/>
</dbReference>
<dbReference type="SMART" id="SM00179">
    <property type="entry name" value="EGF_CA"/>
    <property type="match status" value="8"/>
</dbReference>
<dbReference type="SUPFAM" id="SSF57196">
    <property type="entry name" value="EGF/Laminin"/>
    <property type="match status" value="2"/>
</dbReference>
<dbReference type="SUPFAM" id="SSF57184">
    <property type="entry name" value="Growth factor receptor domain"/>
    <property type="match status" value="2"/>
</dbReference>
<dbReference type="PROSITE" id="PS01177">
    <property type="entry name" value="ANAPHYLATOXIN_1"/>
    <property type="match status" value="1"/>
</dbReference>
<dbReference type="PROSITE" id="PS01178">
    <property type="entry name" value="ANAPHYLATOXIN_2"/>
    <property type="match status" value="1"/>
</dbReference>
<dbReference type="PROSITE" id="PS00010">
    <property type="entry name" value="ASX_HYDROXYL"/>
    <property type="match status" value="3"/>
</dbReference>
<dbReference type="PROSITE" id="PS01186">
    <property type="entry name" value="EGF_2"/>
    <property type="match status" value="3"/>
</dbReference>
<dbReference type="PROSITE" id="PS50026">
    <property type="entry name" value="EGF_3"/>
    <property type="match status" value="3"/>
</dbReference>
<dbReference type="PROSITE" id="PS01187">
    <property type="entry name" value="EGF_CA"/>
    <property type="match status" value="6"/>
</dbReference>
<sequence>MDLYMIVLLSLCGLLRAQETTDTISLDNCCEDGKKRGLESQDCSSLPLISESTTCRVVQEQCCSAVLEDSICTSGINMAKDQSSCDALLSGSSTCETKTTKMCCECCLLGSSRCRIRVSPVSSVCRWSISRGPGVRSCCVDKQPAHGVQPSKGDAQNTEDQCRAAGCAQRCLNGTCSCLDGFKLKTDGKHCEDINECLLGPHHCVTGERCINTLGSYRCQREISCGTGYELTDNNKCKDIDECDLGTHNCAAEMECQNTAGSFRCRPRMQCAAGFIQDALGSCIDINECVSVTALSRGQMCFNTVGSFICQRHSVTCGRGYHLNAEGTRCVDIDECAGPDNSCDGHGCINLVGSYRCECRTGFIFNSISRSCEDIDECRNYPGRLCAHKCENILGSYKCSCTAGFKLADDGRNCDDVNECESSPCSQGCANVYGSYQSYCRRGYQLSDADGITCEDIDECALPTGGHICSYRCHNTPGSFHCTCPASGYTLAANGRSCQDIDECLTGTHSCSESESCFNIQGGFRCLSFDCPANYRRSGDTRPRVDRADIIRCVKSCQHNDISCVLNPILSHSHTAISLPTFREFNKPEEIVFLRSPTPTHLPHMDSPEIVYDILEGNIQNSFDIIKRLDHGMIVGVVKQVRPLVGPVRTVLKLAMNYVTNGVVSHRNIINVRIYVSEFWF</sequence>
<organism>
    <name type="scientific">Danio rerio</name>
    <name type="common">Zebrafish</name>
    <name type="synonym">Brachydanio rerio</name>
    <dbReference type="NCBI Taxonomy" id="7955"/>
    <lineage>
        <taxon>Eukaryota</taxon>
        <taxon>Metazoa</taxon>
        <taxon>Chordata</taxon>
        <taxon>Craniata</taxon>
        <taxon>Vertebrata</taxon>
        <taxon>Euteleostomi</taxon>
        <taxon>Actinopterygii</taxon>
        <taxon>Neopterygii</taxon>
        <taxon>Teleostei</taxon>
        <taxon>Ostariophysi</taxon>
        <taxon>Cypriniformes</taxon>
        <taxon>Danionidae</taxon>
        <taxon>Danioninae</taxon>
        <taxon>Danio</taxon>
    </lineage>
</organism>
<name>FBLN1_DANRE</name>
<keyword id="KW-0025">Alternative splicing</keyword>
<keyword id="KW-0106">Calcium</keyword>
<keyword id="KW-1015">Disulfide bond</keyword>
<keyword id="KW-0245">EGF-like domain</keyword>
<keyword id="KW-0272">Extracellular matrix</keyword>
<keyword id="KW-0325">Glycoprotein</keyword>
<keyword id="KW-1185">Reference proteome</keyword>
<keyword id="KW-0677">Repeat</keyword>
<keyword id="KW-0964">Secreted</keyword>
<keyword id="KW-0732">Signal</keyword>
<evidence type="ECO:0000250" key="1"/>
<evidence type="ECO:0000255" key="2"/>
<evidence type="ECO:0000255" key="3">
    <source>
        <dbReference type="PROSITE-ProRule" id="PRU00022"/>
    </source>
</evidence>
<evidence type="ECO:0000255" key="4">
    <source>
        <dbReference type="PROSITE-ProRule" id="PRU00076"/>
    </source>
</evidence>
<evidence type="ECO:0000303" key="5">
    <source ref="1"/>
</evidence>
<evidence type="ECO:0000305" key="6"/>
<reference key="1">
    <citation type="journal article" date="1997" name="Dev. Genes Evol.">
        <title>Sequence of zebrafish fibulin-1 and its expression in developing heart and other embryonic organs.</title>
        <authorList>
            <person name="Zhang H.-Y."/>
            <person name="Lardelli M."/>
            <person name="Ekblom P."/>
        </authorList>
    </citation>
    <scope>NUCLEOTIDE SEQUENCE [MRNA] (ISOFORMS C AND D)</scope>
</reference>
<comment type="function">
    <text>Incorporated into fibronectin-containing matrix fibers. May play a role in cell adhesion and migration along protein fibers within the extracellular matrix (ECM). Could be important for certain developmental processes and contribute to the supramolecular organization of ECM architecture, in particular to those of basement membranes.</text>
</comment>
<comment type="subunit">
    <text>Homomultimerizes and interacts with various extracellular matrix components such as FN1, LAMA1, NID, AGC1 and CSPG2.</text>
</comment>
<comment type="subcellular location">
    <subcellularLocation>
        <location>Secreted</location>
        <location>Extracellular space</location>
        <location>Extracellular matrix</location>
    </subcellularLocation>
</comment>
<comment type="alternative products">
    <event type="alternative splicing"/>
    <isoform>
        <id>O42182-1</id>
        <name>D</name>
        <sequence type="displayed"/>
    </isoform>
    <isoform>
        <id>O42182-2</id>
        <name>C</name>
        <sequence type="described" ref="VSP_007379"/>
    </isoform>
</comment>
<comment type="developmental stage">
    <text>Isoform C is detected in the later blastula period, 4 hours after fertilization. Isoform D is not detected at this stage, it first appears during the gastrula period in 8 hours old embryos. Expression of both isoforms is then maintained throughout development. During later developmental stages, prominent expression is seen in regions where tissue compartments are continuously moving in relation to each other.</text>
</comment>
<comment type="similarity">
    <text evidence="6">Belongs to the fibulin family.</text>
</comment>
<proteinExistence type="evidence at transcript level"/>
<gene>
    <name type="primary">fbln1</name>
</gene>
<protein>
    <recommendedName>
        <fullName>Fibulin-1</fullName>
        <shortName>FIBL-1</shortName>
    </recommendedName>
</protein>